<evidence type="ECO:0000255" key="1">
    <source>
        <dbReference type="HAMAP-Rule" id="MF_00177"/>
    </source>
</evidence>
<protein>
    <recommendedName>
        <fullName evidence="1">Lysine--tRNA ligase</fullName>
        <ecNumber evidence="1">6.1.1.6</ecNumber>
    </recommendedName>
    <alternativeName>
        <fullName evidence="1">Lysyl-tRNA synthetase</fullName>
        <shortName evidence="1">LysRS</shortName>
    </alternativeName>
</protein>
<keyword id="KW-0030">Aminoacyl-tRNA synthetase</keyword>
<keyword id="KW-0067">ATP-binding</keyword>
<keyword id="KW-0963">Cytoplasm</keyword>
<keyword id="KW-0436">Ligase</keyword>
<keyword id="KW-0547">Nucleotide-binding</keyword>
<keyword id="KW-0648">Protein biosynthesis</keyword>
<feature type="chain" id="PRO_0000278074" description="Lysine--tRNA ligase">
    <location>
        <begin position="1"/>
        <end position="522"/>
    </location>
</feature>
<feature type="short sequence motif" description="'HIGH' region">
    <location>
        <begin position="44"/>
        <end position="52"/>
    </location>
</feature>
<feature type="short sequence motif" description="'KMSKS' region">
    <location>
        <begin position="290"/>
        <end position="294"/>
    </location>
</feature>
<feature type="binding site" evidence="1">
    <location>
        <position position="293"/>
    </location>
    <ligand>
        <name>ATP</name>
        <dbReference type="ChEBI" id="CHEBI:30616"/>
    </ligand>
</feature>
<accession>Q1RI62</accession>
<dbReference type="EC" id="6.1.1.6" evidence="1"/>
<dbReference type="EMBL" id="CP000087">
    <property type="protein sequence ID" value="ABE04952.1"/>
    <property type="molecule type" value="Genomic_DNA"/>
</dbReference>
<dbReference type="RefSeq" id="WP_011477537.1">
    <property type="nucleotide sequence ID" value="NC_007940.1"/>
</dbReference>
<dbReference type="SMR" id="Q1RI62"/>
<dbReference type="KEGG" id="rbe:RBE_0871"/>
<dbReference type="eggNOG" id="COG1384">
    <property type="taxonomic scope" value="Bacteria"/>
</dbReference>
<dbReference type="HOGENOM" id="CLU_025562_2_0_5"/>
<dbReference type="OrthoDB" id="9803151at2"/>
<dbReference type="Proteomes" id="UP000001951">
    <property type="component" value="Chromosome"/>
</dbReference>
<dbReference type="GO" id="GO:0005737">
    <property type="term" value="C:cytoplasm"/>
    <property type="evidence" value="ECO:0007669"/>
    <property type="project" value="UniProtKB-SubCell"/>
</dbReference>
<dbReference type="GO" id="GO:0005524">
    <property type="term" value="F:ATP binding"/>
    <property type="evidence" value="ECO:0007669"/>
    <property type="project" value="UniProtKB-UniRule"/>
</dbReference>
<dbReference type="GO" id="GO:0004824">
    <property type="term" value="F:lysine-tRNA ligase activity"/>
    <property type="evidence" value="ECO:0007669"/>
    <property type="project" value="UniProtKB-UniRule"/>
</dbReference>
<dbReference type="GO" id="GO:0000049">
    <property type="term" value="F:tRNA binding"/>
    <property type="evidence" value="ECO:0007669"/>
    <property type="project" value="InterPro"/>
</dbReference>
<dbReference type="GO" id="GO:0006430">
    <property type="term" value="P:lysyl-tRNA aminoacylation"/>
    <property type="evidence" value="ECO:0007669"/>
    <property type="project" value="UniProtKB-UniRule"/>
</dbReference>
<dbReference type="Gene3D" id="1.10.10.350">
    <property type="match status" value="1"/>
</dbReference>
<dbReference type="Gene3D" id="3.40.50.620">
    <property type="entry name" value="HUPs"/>
    <property type="match status" value="2"/>
</dbReference>
<dbReference type="HAMAP" id="MF_00177">
    <property type="entry name" value="Lys_tRNA_synth_class1"/>
    <property type="match status" value="1"/>
</dbReference>
<dbReference type="InterPro" id="IPR020751">
    <property type="entry name" value="aa-tRNA-synth_I_codon-bd_sub2"/>
</dbReference>
<dbReference type="InterPro" id="IPR001412">
    <property type="entry name" value="aa-tRNA-synth_I_CS"/>
</dbReference>
<dbReference type="InterPro" id="IPR008925">
    <property type="entry name" value="aa_tRNA-synth_I_cd-bd_sf"/>
</dbReference>
<dbReference type="InterPro" id="IPR002904">
    <property type="entry name" value="Lys-tRNA-ligase"/>
</dbReference>
<dbReference type="InterPro" id="IPR014729">
    <property type="entry name" value="Rossmann-like_a/b/a_fold"/>
</dbReference>
<dbReference type="NCBIfam" id="TIGR00467">
    <property type="entry name" value="lysS_arch"/>
    <property type="match status" value="1"/>
</dbReference>
<dbReference type="NCBIfam" id="NF001968">
    <property type="entry name" value="PRK00750.1-2"/>
    <property type="match status" value="1"/>
</dbReference>
<dbReference type="PANTHER" id="PTHR37940">
    <property type="entry name" value="LYSINE--TRNA LIGASE"/>
    <property type="match status" value="1"/>
</dbReference>
<dbReference type="PANTHER" id="PTHR37940:SF1">
    <property type="entry name" value="LYSINE--TRNA LIGASE"/>
    <property type="match status" value="1"/>
</dbReference>
<dbReference type="Pfam" id="PF01921">
    <property type="entry name" value="tRNA-synt_1f"/>
    <property type="match status" value="1"/>
</dbReference>
<dbReference type="SUPFAM" id="SSF48163">
    <property type="entry name" value="An anticodon-binding domain of class I aminoacyl-tRNA synthetases"/>
    <property type="match status" value="1"/>
</dbReference>
<dbReference type="SUPFAM" id="SSF52374">
    <property type="entry name" value="Nucleotidylyl transferase"/>
    <property type="match status" value="1"/>
</dbReference>
<dbReference type="PROSITE" id="PS00178">
    <property type="entry name" value="AA_TRNA_LIGASE_I"/>
    <property type="match status" value="1"/>
</dbReference>
<comment type="catalytic activity">
    <reaction evidence="1">
        <text>tRNA(Lys) + L-lysine + ATP = L-lysyl-tRNA(Lys) + AMP + diphosphate</text>
        <dbReference type="Rhea" id="RHEA:20792"/>
        <dbReference type="Rhea" id="RHEA-COMP:9696"/>
        <dbReference type="Rhea" id="RHEA-COMP:9697"/>
        <dbReference type="ChEBI" id="CHEBI:30616"/>
        <dbReference type="ChEBI" id="CHEBI:32551"/>
        <dbReference type="ChEBI" id="CHEBI:33019"/>
        <dbReference type="ChEBI" id="CHEBI:78442"/>
        <dbReference type="ChEBI" id="CHEBI:78529"/>
        <dbReference type="ChEBI" id="CHEBI:456215"/>
        <dbReference type="EC" id="6.1.1.6"/>
    </reaction>
</comment>
<comment type="subcellular location">
    <subcellularLocation>
        <location evidence="1">Cytoplasm</location>
    </subcellularLocation>
</comment>
<comment type="similarity">
    <text evidence="1">Belongs to the class-I aminoacyl-tRNA synthetase family.</text>
</comment>
<organism>
    <name type="scientific">Rickettsia bellii (strain RML369-C)</name>
    <dbReference type="NCBI Taxonomy" id="336407"/>
    <lineage>
        <taxon>Bacteria</taxon>
        <taxon>Pseudomonadati</taxon>
        <taxon>Pseudomonadota</taxon>
        <taxon>Alphaproteobacteria</taxon>
        <taxon>Rickettsiales</taxon>
        <taxon>Rickettsiaceae</taxon>
        <taxon>Rickettsieae</taxon>
        <taxon>Rickettsia</taxon>
        <taxon>belli group</taxon>
    </lineage>
</organism>
<sequence length="522" mass="60199">MSEILEDAIKSKAWPFEEAKKILDSLNGKTPEKGYVLFETGYGPSGLPHIGTFGENARMVMVQKAFEQLSNIKTKLICFSDDMDGLRKVPSNIPNPEMVAGYMDMPLTSIPDPFGECESYGHYMNAKLRSFLDKFGFEYEFYSSTEMYKAGMFDEMLIRVLEKYDEIMELMLPTFREERKATYSPFMPICPKTGKVLQVPIHKWDAKLGTITYKDENGETIEVPVTKGHCKLQWKPDFGMRWAALKVDYEMYGKDHLANGRLYSEICRILGEKPPVQLCYELFLDENGEKISKSKGNSISVDDWLKYAPVESMALFMYQNPTRAKRLFFDVIPKNVDEYITFNQKYHLEEDRTKRFANPVYHIHHGNVPKIETFGITYSLLLNLTSVCNPSDKSVLWGFISRYEPKAMPNNSPYLDHLAEFAIRYYNDFVKAHKSYLAPSEKHKAILQDILDMLKGLPEQIEAESIQKGIYDIGMKAGYENLRDYFKDLYQILLGQSDGPRLGTFIKLYGISETMKLIEEKL</sequence>
<proteinExistence type="inferred from homology"/>
<reference key="1">
    <citation type="journal article" date="2006" name="PLoS Genet.">
        <title>Genome sequence of Rickettsia bellii illuminates the role of amoebae in gene exchanges between intracellular pathogens.</title>
        <authorList>
            <person name="Ogata H."/>
            <person name="La Scola B."/>
            <person name="Audic S."/>
            <person name="Renesto P."/>
            <person name="Blanc G."/>
            <person name="Robert C."/>
            <person name="Fournier P.-E."/>
            <person name="Claverie J.-M."/>
            <person name="Raoult D."/>
        </authorList>
    </citation>
    <scope>NUCLEOTIDE SEQUENCE [LARGE SCALE GENOMIC DNA]</scope>
    <source>
        <strain>RML369-C</strain>
    </source>
</reference>
<name>SYK_RICBR</name>
<gene>
    <name evidence="1" type="primary">lysS</name>
    <name type="ordered locus">RBE_0871</name>
</gene>